<organism>
    <name type="scientific">Homo sapiens</name>
    <name type="common">Human</name>
    <dbReference type="NCBI Taxonomy" id="9606"/>
    <lineage>
        <taxon>Eukaryota</taxon>
        <taxon>Metazoa</taxon>
        <taxon>Chordata</taxon>
        <taxon>Craniata</taxon>
        <taxon>Vertebrata</taxon>
        <taxon>Euteleostomi</taxon>
        <taxon>Mammalia</taxon>
        <taxon>Eutheria</taxon>
        <taxon>Euarchontoglires</taxon>
        <taxon>Primates</taxon>
        <taxon>Haplorrhini</taxon>
        <taxon>Catarrhini</taxon>
        <taxon>Hominidae</taxon>
        <taxon>Homo</taxon>
    </lineage>
</organism>
<evidence type="ECO:0000255" key="1">
    <source>
        <dbReference type="PROSITE-ProRule" id="PRU00042"/>
    </source>
</evidence>
<evidence type="ECO:0000255" key="2">
    <source>
        <dbReference type="PROSITE-ProRule" id="PRU00119"/>
    </source>
</evidence>
<evidence type="ECO:0000303" key="3">
    <source>
    </source>
</evidence>
<evidence type="ECO:0000305" key="4"/>
<keyword id="KW-0025">Alternative splicing</keyword>
<keyword id="KW-0238">DNA-binding</keyword>
<keyword id="KW-0479">Metal-binding</keyword>
<keyword id="KW-0539">Nucleus</keyword>
<keyword id="KW-1267">Proteomics identification</keyword>
<keyword id="KW-1185">Reference proteome</keyword>
<keyword id="KW-0677">Repeat</keyword>
<keyword id="KW-0804">Transcription</keyword>
<keyword id="KW-0805">Transcription regulation</keyword>
<keyword id="KW-0862">Zinc</keyword>
<keyword id="KW-0863">Zinc-finger</keyword>
<gene>
    <name type="primary">ZNF433</name>
</gene>
<proteinExistence type="evidence at protein level"/>
<accession>Q8N7K0</accession>
<accession>Q86VX3</accession>
<dbReference type="EMBL" id="AK098300">
    <property type="protein sequence ID" value="BAC05279.1"/>
    <property type="molecule type" value="mRNA"/>
</dbReference>
<dbReference type="EMBL" id="CH471106">
    <property type="protein sequence ID" value="EAW84254.1"/>
    <property type="molecule type" value="Genomic_DNA"/>
</dbReference>
<dbReference type="EMBL" id="BC047412">
    <property type="protein sequence ID" value="AAH47412.1"/>
    <property type="molecule type" value="mRNA"/>
</dbReference>
<dbReference type="CCDS" id="CCDS45983.1">
    <molecule id="Q8N7K0-1"/>
</dbReference>
<dbReference type="CCDS" id="CCDS77240.1">
    <molecule id="Q8N7K0-2"/>
</dbReference>
<dbReference type="RefSeq" id="NP_001073880.1">
    <molecule id="Q8N7K0-1"/>
    <property type="nucleotide sequence ID" value="NM_001080411.3"/>
</dbReference>
<dbReference type="RefSeq" id="NP_001295275.1">
    <property type="nucleotide sequence ID" value="NM_001308346.1"/>
</dbReference>
<dbReference type="RefSeq" id="NP_001295277.1">
    <property type="nucleotide sequence ID" value="NM_001308348.1"/>
</dbReference>
<dbReference type="RefSeq" id="NP_001295280.1">
    <molecule id="Q8N7K0-2"/>
    <property type="nucleotide sequence ID" value="NM_001308351.2"/>
</dbReference>
<dbReference type="RefSeq" id="NP_001295284.1">
    <molecule id="Q8N7K0-2"/>
    <property type="nucleotide sequence ID" value="NM_001308355.2"/>
</dbReference>
<dbReference type="RefSeq" id="NP_001295286.1">
    <molecule id="Q8N7K0-2"/>
    <property type="nucleotide sequence ID" value="NM_001308357.2"/>
</dbReference>
<dbReference type="RefSeq" id="XP_006722724.1">
    <molecule id="Q8N7K0-2"/>
    <property type="nucleotide sequence ID" value="XM_006722661.4"/>
</dbReference>
<dbReference type="RefSeq" id="XP_054176039.1">
    <molecule id="Q8N7K0-2"/>
    <property type="nucleotide sequence ID" value="XM_054320064.1"/>
</dbReference>
<dbReference type="SMR" id="Q8N7K0"/>
<dbReference type="BioGRID" id="127846">
    <property type="interactions" value="9"/>
</dbReference>
<dbReference type="FunCoup" id="Q8N7K0">
    <property type="interactions" value="401"/>
</dbReference>
<dbReference type="IntAct" id="Q8N7K0">
    <property type="interactions" value="7"/>
</dbReference>
<dbReference type="STRING" id="9606.ENSP00000339767"/>
<dbReference type="GlyGen" id="Q8N7K0">
    <property type="glycosylation" value="1 site, 1 O-linked glycan (1 site)"/>
</dbReference>
<dbReference type="iPTMnet" id="Q8N7K0"/>
<dbReference type="PhosphoSitePlus" id="Q8N7K0"/>
<dbReference type="BioMuta" id="ZNF433"/>
<dbReference type="DMDM" id="30173446"/>
<dbReference type="jPOST" id="Q8N7K0"/>
<dbReference type="MassIVE" id="Q8N7K0"/>
<dbReference type="PaxDb" id="9606-ENSP00000339767"/>
<dbReference type="PeptideAtlas" id="Q8N7K0"/>
<dbReference type="Antibodypedia" id="25988">
    <property type="antibodies" value="130 antibodies from 20 providers"/>
</dbReference>
<dbReference type="DNASU" id="163059"/>
<dbReference type="Ensembl" id="ENST00000344980.11">
    <molecule id="Q8N7K0-1"/>
    <property type="protein sequence ID" value="ENSP00000339767.6"/>
    <property type="gene ID" value="ENSG00000197647.13"/>
</dbReference>
<dbReference type="Ensembl" id="ENST00000419886.7">
    <molecule id="Q8N7K0-2"/>
    <property type="protein sequence ID" value="ENSP00000393416.2"/>
    <property type="gene ID" value="ENSG00000197647.13"/>
</dbReference>
<dbReference type="Ensembl" id="ENST00000547560.6">
    <molecule id="Q8N7K0-2"/>
    <property type="protein sequence ID" value="ENSP00000448806.2"/>
    <property type="gene ID" value="ENSG00000197647.13"/>
</dbReference>
<dbReference type="Ensembl" id="ENST00000552904.6">
    <molecule id="Q8N7K0-2"/>
    <property type="protein sequence ID" value="ENSP00000448233.2"/>
    <property type="gene ID" value="ENSG00000197647.13"/>
</dbReference>
<dbReference type="GeneID" id="163059"/>
<dbReference type="KEGG" id="hsa:163059"/>
<dbReference type="UCSC" id="uc002msy.2">
    <molecule id="Q8N7K0-1"/>
    <property type="organism name" value="human"/>
</dbReference>
<dbReference type="AGR" id="HGNC:20811"/>
<dbReference type="CTD" id="163059"/>
<dbReference type="DisGeNET" id="163059"/>
<dbReference type="GeneCards" id="ZNF433"/>
<dbReference type="HGNC" id="HGNC:20811">
    <property type="gene designation" value="ZNF433"/>
</dbReference>
<dbReference type="HPA" id="ENSG00000197647">
    <property type="expression patterns" value="Tissue enhanced (testis)"/>
</dbReference>
<dbReference type="neXtProt" id="NX_Q8N7K0"/>
<dbReference type="OpenTargets" id="ENSG00000197647"/>
<dbReference type="PharmGKB" id="PA134943717"/>
<dbReference type="VEuPathDB" id="HostDB:ENSG00000197647"/>
<dbReference type="eggNOG" id="KOG1721">
    <property type="taxonomic scope" value="Eukaryota"/>
</dbReference>
<dbReference type="GeneTree" id="ENSGT00950000182755"/>
<dbReference type="HOGENOM" id="CLU_002678_17_1_1"/>
<dbReference type="InParanoid" id="Q8N7K0"/>
<dbReference type="OMA" id="YECKDYE"/>
<dbReference type="OrthoDB" id="427030at2759"/>
<dbReference type="PAN-GO" id="Q8N7K0">
    <property type="GO annotations" value="4 GO annotations based on evolutionary models"/>
</dbReference>
<dbReference type="PhylomeDB" id="Q8N7K0"/>
<dbReference type="TreeFam" id="TF343410"/>
<dbReference type="PathwayCommons" id="Q8N7K0"/>
<dbReference type="Reactome" id="R-HSA-212436">
    <property type="pathway name" value="Generic Transcription Pathway"/>
</dbReference>
<dbReference type="SignaLink" id="Q8N7K0"/>
<dbReference type="BioGRID-ORCS" id="163059">
    <property type="hits" value="12 hits in 1146 CRISPR screens"/>
</dbReference>
<dbReference type="ChiTaRS" id="ZNF433">
    <property type="organism name" value="human"/>
</dbReference>
<dbReference type="GenomeRNAi" id="163059"/>
<dbReference type="Pharos" id="Q8N7K0">
    <property type="development level" value="Tdark"/>
</dbReference>
<dbReference type="PRO" id="PR:Q8N7K0"/>
<dbReference type="Proteomes" id="UP000005640">
    <property type="component" value="Chromosome 19"/>
</dbReference>
<dbReference type="RNAct" id="Q8N7K0">
    <property type="molecule type" value="protein"/>
</dbReference>
<dbReference type="Bgee" id="ENSG00000197647">
    <property type="expression patterns" value="Expressed in right testis and 104 other cell types or tissues"/>
</dbReference>
<dbReference type="ExpressionAtlas" id="Q8N7K0">
    <property type="expression patterns" value="baseline and differential"/>
</dbReference>
<dbReference type="GO" id="GO:0005634">
    <property type="term" value="C:nucleus"/>
    <property type="evidence" value="ECO:0000318"/>
    <property type="project" value="GO_Central"/>
</dbReference>
<dbReference type="GO" id="GO:0000981">
    <property type="term" value="F:DNA-binding transcription factor activity, RNA polymerase II-specific"/>
    <property type="evidence" value="ECO:0000318"/>
    <property type="project" value="GO_Central"/>
</dbReference>
<dbReference type="GO" id="GO:0000977">
    <property type="term" value="F:RNA polymerase II transcription regulatory region sequence-specific DNA binding"/>
    <property type="evidence" value="ECO:0000318"/>
    <property type="project" value="GO_Central"/>
</dbReference>
<dbReference type="GO" id="GO:0008270">
    <property type="term" value="F:zinc ion binding"/>
    <property type="evidence" value="ECO:0007669"/>
    <property type="project" value="UniProtKB-KW"/>
</dbReference>
<dbReference type="GO" id="GO:0006357">
    <property type="term" value="P:regulation of transcription by RNA polymerase II"/>
    <property type="evidence" value="ECO:0000318"/>
    <property type="project" value="GO_Central"/>
</dbReference>
<dbReference type="CDD" id="cd07765">
    <property type="entry name" value="KRAB_A-box"/>
    <property type="match status" value="1"/>
</dbReference>
<dbReference type="FunFam" id="3.30.160.60:FF:000006">
    <property type="entry name" value="Zinc finger protein 184 (Kruppel-like)"/>
    <property type="match status" value="1"/>
</dbReference>
<dbReference type="FunFam" id="3.30.160.60:FF:000650">
    <property type="entry name" value="Zinc finger protein 197"/>
    <property type="match status" value="1"/>
</dbReference>
<dbReference type="FunFam" id="3.30.160.60:FF:000193">
    <property type="entry name" value="Zinc finger protein 300"/>
    <property type="match status" value="2"/>
</dbReference>
<dbReference type="FunFam" id="3.30.160.60:FF:000184">
    <property type="entry name" value="Zinc finger protein 333"/>
    <property type="match status" value="3"/>
</dbReference>
<dbReference type="FunFam" id="3.30.160.60:FF:002343">
    <property type="entry name" value="Zinc finger protein 33A"/>
    <property type="match status" value="1"/>
</dbReference>
<dbReference type="FunFam" id="3.30.160.60:FF:000690">
    <property type="entry name" value="Zinc finger protein 354C"/>
    <property type="match status" value="1"/>
</dbReference>
<dbReference type="FunFam" id="3.30.160.60:FF:003137">
    <property type="entry name" value="Zinc finger protein 433"/>
    <property type="match status" value="1"/>
</dbReference>
<dbReference type="FunFam" id="3.30.160.60:FF:003316">
    <property type="entry name" value="Zinc finger protein 433"/>
    <property type="match status" value="1"/>
</dbReference>
<dbReference type="FunFam" id="3.30.160.60:FF:002254">
    <property type="entry name" value="Zinc finger protein 540"/>
    <property type="match status" value="3"/>
</dbReference>
<dbReference type="FunFam" id="3.30.160.60:FF:000371">
    <property type="entry name" value="Zinc finger protein 555"/>
    <property type="match status" value="1"/>
</dbReference>
<dbReference type="FunFam" id="3.30.160.60:FF:000156">
    <property type="entry name" value="Zinc finger protein 568"/>
    <property type="match status" value="1"/>
</dbReference>
<dbReference type="FunFam" id="3.30.160.60:FF:001270">
    <property type="entry name" value="zinc finger protein 583 isoform X1"/>
    <property type="match status" value="1"/>
</dbReference>
<dbReference type="FunFam" id="3.30.160.60:FF:002244">
    <property type="entry name" value="Zinc finger protein 625"/>
    <property type="match status" value="1"/>
</dbReference>
<dbReference type="FunFam" id="3.30.160.60:FF:000229">
    <property type="entry name" value="Zinc finger protein 90 homolog"/>
    <property type="match status" value="1"/>
</dbReference>
<dbReference type="Gene3D" id="6.10.140.140">
    <property type="match status" value="1"/>
</dbReference>
<dbReference type="Gene3D" id="3.30.160.60">
    <property type="entry name" value="Classic Zinc Finger"/>
    <property type="match status" value="19"/>
</dbReference>
<dbReference type="InterPro" id="IPR001909">
    <property type="entry name" value="KRAB"/>
</dbReference>
<dbReference type="InterPro" id="IPR036051">
    <property type="entry name" value="KRAB_dom_sf"/>
</dbReference>
<dbReference type="InterPro" id="IPR036236">
    <property type="entry name" value="Znf_C2H2_sf"/>
</dbReference>
<dbReference type="InterPro" id="IPR013087">
    <property type="entry name" value="Znf_C2H2_type"/>
</dbReference>
<dbReference type="PANTHER" id="PTHR24381">
    <property type="entry name" value="ZINC FINGER PROTEIN"/>
    <property type="match status" value="1"/>
</dbReference>
<dbReference type="PANTHER" id="PTHR24381:SF136">
    <property type="entry name" value="ZINC FINGER PROTEIN 124-RELATED"/>
    <property type="match status" value="1"/>
</dbReference>
<dbReference type="Pfam" id="PF01352">
    <property type="entry name" value="KRAB"/>
    <property type="match status" value="1"/>
</dbReference>
<dbReference type="Pfam" id="PF00096">
    <property type="entry name" value="zf-C2H2"/>
    <property type="match status" value="12"/>
</dbReference>
<dbReference type="Pfam" id="PF13465">
    <property type="entry name" value="zf-H2C2_2"/>
    <property type="match status" value="1"/>
</dbReference>
<dbReference type="SMART" id="SM00349">
    <property type="entry name" value="KRAB"/>
    <property type="match status" value="1"/>
</dbReference>
<dbReference type="SMART" id="SM00355">
    <property type="entry name" value="ZnF_C2H2"/>
    <property type="match status" value="19"/>
</dbReference>
<dbReference type="SUPFAM" id="SSF57667">
    <property type="entry name" value="beta-beta-alpha zinc fingers"/>
    <property type="match status" value="10"/>
</dbReference>
<dbReference type="SUPFAM" id="SSF109640">
    <property type="entry name" value="KRAB domain (Kruppel-associated box)"/>
    <property type="match status" value="1"/>
</dbReference>
<dbReference type="PROSITE" id="PS50805">
    <property type="entry name" value="KRAB"/>
    <property type="match status" value="1"/>
</dbReference>
<dbReference type="PROSITE" id="PS00028">
    <property type="entry name" value="ZINC_FINGER_C2H2_1"/>
    <property type="match status" value="18"/>
</dbReference>
<dbReference type="PROSITE" id="PS50157">
    <property type="entry name" value="ZINC_FINGER_C2H2_2"/>
    <property type="match status" value="19"/>
</dbReference>
<name>ZN433_HUMAN</name>
<reference key="1">
    <citation type="journal article" date="2004" name="Nat. Genet.">
        <title>Complete sequencing and characterization of 21,243 full-length human cDNAs.</title>
        <authorList>
            <person name="Ota T."/>
            <person name="Suzuki Y."/>
            <person name="Nishikawa T."/>
            <person name="Otsuki T."/>
            <person name="Sugiyama T."/>
            <person name="Irie R."/>
            <person name="Wakamatsu A."/>
            <person name="Hayashi K."/>
            <person name="Sato H."/>
            <person name="Nagai K."/>
            <person name="Kimura K."/>
            <person name="Makita H."/>
            <person name="Sekine M."/>
            <person name="Obayashi M."/>
            <person name="Nishi T."/>
            <person name="Shibahara T."/>
            <person name="Tanaka T."/>
            <person name="Ishii S."/>
            <person name="Yamamoto J."/>
            <person name="Saito K."/>
            <person name="Kawai Y."/>
            <person name="Isono Y."/>
            <person name="Nakamura Y."/>
            <person name="Nagahari K."/>
            <person name="Murakami K."/>
            <person name="Yasuda T."/>
            <person name="Iwayanagi T."/>
            <person name="Wagatsuma M."/>
            <person name="Shiratori A."/>
            <person name="Sudo H."/>
            <person name="Hosoiri T."/>
            <person name="Kaku Y."/>
            <person name="Kodaira H."/>
            <person name="Kondo H."/>
            <person name="Sugawara M."/>
            <person name="Takahashi M."/>
            <person name="Kanda K."/>
            <person name="Yokoi T."/>
            <person name="Furuya T."/>
            <person name="Kikkawa E."/>
            <person name="Omura Y."/>
            <person name="Abe K."/>
            <person name="Kamihara K."/>
            <person name="Katsuta N."/>
            <person name="Sato K."/>
            <person name="Tanikawa M."/>
            <person name="Yamazaki M."/>
            <person name="Ninomiya K."/>
            <person name="Ishibashi T."/>
            <person name="Yamashita H."/>
            <person name="Murakawa K."/>
            <person name="Fujimori K."/>
            <person name="Tanai H."/>
            <person name="Kimata M."/>
            <person name="Watanabe M."/>
            <person name="Hiraoka S."/>
            <person name="Chiba Y."/>
            <person name="Ishida S."/>
            <person name="Ono Y."/>
            <person name="Takiguchi S."/>
            <person name="Watanabe S."/>
            <person name="Yosida M."/>
            <person name="Hotuta T."/>
            <person name="Kusano J."/>
            <person name="Kanehori K."/>
            <person name="Takahashi-Fujii A."/>
            <person name="Hara H."/>
            <person name="Tanase T.-O."/>
            <person name="Nomura Y."/>
            <person name="Togiya S."/>
            <person name="Komai F."/>
            <person name="Hara R."/>
            <person name="Takeuchi K."/>
            <person name="Arita M."/>
            <person name="Imose N."/>
            <person name="Musashino K."/>
            <person name="Yuuki H."/>
            <person name="Oshima A."/>
            <person name="Sasaki N."/>
            <person name="Aotsuka S."/>
            <person name="Yoshikawa Y."/>
            <person name="Matsunawa H."/>
            <person name="Ichihara T."/>
            <person name="Shiohata N."/>
            <person name="Sano S."/>
            <person name="Moriya S."/>
            <person name="Momiyama H."/>
            <person name="Satoh N."/>
            <person name="Takami S."/>
            <person name="Terashima Y."/>
            <person name="Suzuki O."/>
            <person name="Nakagawa S."/>
            <person name="Senoh A."/>
            <person name="Mizoguchi H."/>
            <person name="Goto Y."/>
            <person name="Shimizu F."/>
            <person name="Wakebe H."/>
            <person name="Hishigaki H."/>
            <person name="Watanabe T."/>
            <person name="Sugiyama A."/>
            <person name="Takemoto M."/>
            <person name="Kawakami B."/>
            <person name="Yamazaki M."/>
            <person name="Watanabe K."/>
            <person name="Kumagai A."/>
            <person name="Itakura S."/>
            <person name="Fukuzumi Y."/>
            <person name="Fujimori Y."/>
            <person name="Komiyama M."/>
            <person name="Tashiro H."/>
            <person name="Tanigami A."/>
            <person name="Fujiwara T."/>
            <person name="Ono T."/>
            <person name="Yamada K."/>
            <person name="Fujii Y."/>
            <person name="Ozaki K."/>
            <person name="Hirao M."/>
            <person name="Ohmori Y."/>
            <person name="Kawabata A."/>
            <person name="Hikiji T."/>
            <person name="Kobatake N."/>
            <person name="Inagaki H."/>
            <person name="Ikema Y."/>
            <person name="Okamoto S."/>
            <person name="Okitani R."/>
            <person name="Kawakami T."/>
            <person name="Noguchi S."/>
            <person name="Itoh T."/>
            <person name="Shigeta K."/>
            <person name="Senba T."/>
            <person name="Matsumura K."/>
            <person name="Nakajima Y."/>
            <person name="Mizuno T."/>
            <person name="Morinaga M."/>
            <person name="Sasaki M."/>
            <person name="Togashi T."/>
            <person name="Oyama M."/>
            <person name="Hata H."/>
            <person name="Watanabe M."/>
            <person name="Komatsu T."/>
            <person name="Mizushima-Sugano J."/>
            <person name="Satoh T."/>
            <person name="Shirai Y."/>
            <person name="Takahashi Y."/>
            <person name="Nakagawa K."/>
            <person name="Okumura K."/>
            <person name="Nagase T."/>
            <person name="Nomura N."/>
            <person name="Kikuchi H."/>
            <person name="Masuho Y."/>
            <person name="Yamashita R."/>
            <person name="Nakai K."/>
            <person name="Yada T."/>
            <person name="Nakamura Y."/>
            <person name="Ohara O."/>
            <person name="Isogai T."/>
            <person name="Sugano S."/>
        </authorList>
    </citation>
    <scope>NUCLEOTIDE SEQUENCE [LARGE SCALE MRNA] (ISOFORM 1)</scope>
    <source>
        <tissue>Uterus</tissue>
    </source>
</reference>
<reference key="2">
    <citation type="submission" date="2005-07" db="EMBL/GenBank/DDBJ databases">
        <authorList>
            <person name="Mural R.J."/>
            <person name="Istrail S."/>
            <person name="Sutton G.G."/>
            <person name="Florea L."/>
            <person name="Halpern A.L."/>
            <person name="Mobarry C.M."/>
            <person name="Lippert R."/>
            <person name="Walenz B."/>
            <person name="Shatkay H."/>
            <person name="Dew I."/>
            <person name="Miller J.R."/>
            <person name="Flanigan M.J."/>
            <person name="Edwards N.J."/>
            <person name="Bolanos R."/>
            <person name="Fasulo D."/>
            <person name="Halldorsson B.V."/>
            <person name="Hannenhalli S."/>
            <person name="Turner R."/>
            <person name="Yooseph S."/>
            <person name="Lu F."/>
            <person name="Nusskern D.R."/>
            <person name="Shue B.C."/>
            <person name="Zheng X.H."/>
            <person name="Zhong F."/>
            <person name="Delcher A.L."/>
            <person name="Huson D.H."/>
            <person name="Kravitz S.A."/>
            <person name="Mouchard L."/>
            <person name="Reinert K."/>
            <person name="Remington K.A."/>
            <person name="Clark A.G."/>
            <person name="Waterman M.S."/>
            <person name="Eichler E.E."/>
            <person name="Adams M.D."/>
            <person name="Hunkapiller M.W."/>
            <person name="Myers E.W."/>
            <person name="Venter J.C."/>
        </authorList>
    </citation>
    <scope>NUCLEOTIDE SEQUENCE [LARGE SCALE GENOMIC DNA]</scope>
</reference>
<reference key="3">
    <citation type="journal article" date="2004" name="Genome Res.">
        <title>The status, quality, and expansion of the NIH full-length cDNA project: the Mammalian Gene Collection (MGC).</title>
        <authorList>
            <consortium name="The MGC Project Team"/>
        </authorList>
    </citation>
    <scope>NUCLEOTIDE SEQUENCE [LARGE SCALE MRNA] (ISOFORM 2)</scope>
    <source>
        <tissue>Testis</tissue>
    </source>
</reference>
<sequence length="673" mass="77243">MMFQDSVAFEDVAVTFTQEEWALLDPSQKNLCRDVMQETFRNLASIGKKWKPQNIYVEYENLRRNLRIVGERLFESKEGHQHGEILTQVPDDMLKKTTTGVKSCESSVYGEVGSAHSSLNRHIRDDTGHKAYEYQEYGQKPYKCKYCKKPFNCLSSVQTHERAHSGRKLYVCEECGKTFISHSNLQRHRIMHRGDGPYKCKFCGKALMFLSLYLIHKRTHTGEKPYQCKQCGKAFSHSSSLRIHERTHTGEKPYKCNECGKAFHSSTCLHAHKRTHTGEKPYECKQCGKAFSSSHSFQIHERTHTGEKPYECKECGKAFKCPSSVRRHERTHSRKKPYECKHCGKVLSYLTSFQNHLGMHTGEISHKCKICGKAFYSPSSLQTHEKTHTGEKPYKCNQCGKAFNSSSSFRYHERTHTGEKPYECKQCGKAFRSASLLQTHGRTHTGEKPYACKECGKPFSNFSFFQIHERMHREEKPYECKGYGKTFSLPSLFHRHERTHTGGKTYECKQCGRSFNCSSSFRYHGRTHTGEKPYECKQCGKAFRSASQLQIHGRTHTGEKPYECKQCGKAFGSASHLQMHGRTHTGEKPYECKQCGKSFGCASRLQMHGRTHTGEKPYKCKQCGKAFGCPSNLRRHGRTHTGEKPYKCNQCGKVFRCSSQLQVHGRAHCIDTP</sequence>
<protein>
    <recommendedName>
        <fullName>Zinc finger protein 433</fullName>
    </recommendedName>
</protein>
<feature type="chain" id="PRO_0000047581" description="Zinc finger protein 433">
    <location>
        <begin position="1"/>
        <end position="673"/>
    </location>
</feature>
<feature type="domain" description="KRAB" evidence="2">
    <location>
        <begin position="7"/>
        <end position="85"/>
    </location>
</feature>
<feature type="zinc finger region" description="C2H2-type 1" evidence="1">
    <location>
        <begin position="142"/>
        <end position="164"/>
    </location>
</feature>
<feature type="zinc finger region" description="C2H2-type 2" evidence="1">
    <location>
        <begin position="170"/>
        <end position="192"/>
    </location>
</feature>
<feature type="zinc finger region" description="C2H2-type 3" evidence="1">
    <location>
        <begin position="198"/>
        <end position="220"/>
    </location>
</feature>
<feature type="zinc finger region" description="C2H2-type 4" evidence="1">
    <location>
        <begin position="226"/>
        <end position="248"/>
    </location>
</feature>
<feature type="zinc finger region" description="C2H2-type 5" evidence="1">
    <location>
        <begin position="254"/>
        <end position="276"/>
    </location>
</feature>
<feature type="zinc finger region" description="C2H2-type 6" evidence="1">
    <location>
        <begin position="282"/>
        <end position="304"/>
    </location>
</feature>
<feature type="zinc finger region" description="C2H2-type 7" evidence="1">
    <location>
        <begin position="310"/>
        <end position="332"/>
    </location>
</feature>
<feature type="zinc finger region" description="C2H2-type 8" evidence="1">
    <location>
        <begin position="338"/>
        <end position="360"/>
    </location>
</feature>
<feature type="zinc finger region" description="C2H2-type 9" evidence="1">
    <location>
        <begin position="366"/>
        <end position="388"/>
    </location>
</feature>
<feature type="zinc finger region" description="C2H2-type 10" evidence="1">
    <location>
        <begin position="394"/>
        <end position="416"/>
    </location>
</feature>
<feature type="zinc finger region" description="C2H2-type 11" evidence="1">
    <location>
        <begin position="422"/>
        <end position="444"/>
    </location>
</feature>
<feature type="zinc finger region" description="C2H2-type 12" evidence="1">
    <location>
        <begin position="450"/>
        <end position="472"/>
    </location>
</feature>
<feature type="zinc finger region" description="C2H2-type 13; degenerate" evidence="1">
    <location>
        <begin position="478"/>
        <end position="500"/>
    </location>
</feature>
<feature type="zinc finger region" description="C2H2-type 14" evidence="1">
    <location>
        <begin position="506"/>
        <end position="528"/>
    </location>
</feature>
<feature type="zinc finger region" description="C2H2-type 15" evidence="1">
    <location>
        <begin position="534"/>
        <end position="556"/>
    </location>
</feature>
<feature type="zinc finger region" description="C2H2-type 16" evidence="1">
    <location>
        <begin position="562"/>
        <end position="584"/>
    </location>
</feature>
<feature type="zinc finger region" description="C2H2-type 17" evidence="1">
    <location>
        <begin position="590"/>
        <end position="612"/>
    </location>
</feature>
<feature type="zinc finger region" description="C2H2-type 18" evidence="1">
    <location>
        <begin position="618"/>
        <end position="640"/>
    </location>
</feature>
<feature type="zinc finger region" description="C2H2-type 19" evidence="1">
    <location>
        <begin position="646"/>
        <end position="668"/>
    </location>
</feature>
<feature type="splice variant" id="VSP_035523" description="In isoform 2." evidence="3">
    <location>
        <begin position="1"/>
        <end position="35"/>
    </location>
</feature>
<comment type="function">
    <text>May be involved in transcriptional regulation.</text>
</comment>
<comment type="interaction">
    <interactant intactId="EBI-10267553">
        <id>Q8N7K0</id>
    </interactant>
    <interactant intactId="EBI-739624">
        <id>Q8NHQ1</id>
        <label>CEP70</label>
    </interactant>
    <organismsDiffer>false</organismsDiffer>
    <experiments>3</experiments>
</comment>
<comment type="interaction">
    <interactant intactId="EBI-10267553">
        <id>Q8N7K0</id>
    </interactant>
    <interactant intactId="EBI-10172150">
        <id>P60370</id>
        <label>KRTAP10-5</label>
    </interactant>
    <organismsDiffer>false</organismsDiffer>
    <experiments>3</experiments>
</comment>
<comment type="interaction">
    <interactant intactId="EBI-10267553">
        <id>Q8N7K0</id>
    </interactant>
    <interactant intactId="EBI-10172290">
        <id>P60409</id>
        <label>KRTAP10-7</label>
    </interactant>
    <organismsDiffer>false</organismsDiffer>
    <experiments>3</experiments>
</comment>
<comment type="interaction">
    <interactant intactId="EBI-10267553">
        <id>Q8N7K0</id>
    </interactant>
    <interactant intactId="EBI-10172052">
        <id>P60411</id>
        <label>KRTAP10-9</label>
    </interactant>
    <organismsDiffer>false</organismsDiffer>
    <experiments>3</experiments>
</comment>
<comment type="interaction">
    <interactant intactId="EBI-10267553">
        <id>Q8N7K0</id>
    </interactant>
    <interactant intactId="EBI-724076">
        <id>Q99750</id>
        <label>MDFI</label>
    </interactant>
    <organismsDiffer>false</organismsDiffer>
    <experiments>3</experiments>
</comment>
<comment type="subcellular location">
    <subcellularLocation>
        <location evidence="4">Nucleus</location>
    </subcellularLocation>
</comment>
<comment type="alternative products">
    <event type="alternative splicing"/>
    <isoform>
        <id>Q8N7K0-1</id>
        <name>1</name>
        <sequence type="displayed"/>
    </isoform>
    <isoform>
        <id>Q8N7K0-2</id>
        <name>2</name>
        <sequence type="described" ref="VSP_035523"/>
    </isoform>
</comment>
<comment type="similarity">
    <text evidence="4">Belongs to the krueppel C2H2-type zinc-finger protein family.</text>
</comment>